<name>INHA_MYCTO</name>
<feature type="chain" id="PRO_0000428318" description="Enoyl-[acyl-carrier-protein] reductase [NADH]">
    <location>
        <begin position="1"/>
        <end position="269"/>
    </location>
</feature>
<feature type="binding site" evidence="1">
    <location>
        <begin position="20"/>
        <end position="21"/>
    </location>
    <ligand>
        <name>NAD(+)</name>
        <dbReference type="ChEBI" id="CHEBI:57540"/>
    </ligand>
</feature>
<feature type="binding site" evidence="1">
    <location>
        <begin position="64"/>
        <end position="65"/>
    </location>
    <ligand>
        <name>NAD(+)</name>
        <dbReference type="ChEBI" id="CHEBI:57540"/>
    </ligand>
</feature>
<feature type="binding site" evidence="1">
    <location>
        <begin position="95"/>
        <end position="96"/>
    </location>
    <ligand>
        <name>NAD(+)</name>
        <dbReference type="ChEBI" id="CHEBI:57540"/>
    </ligand>
</feature>
<feature type="binding site" evidence="1">
    <location>
        <position position="158"/>
    </location>
    <ligand>
        <name>substrate</name>
    </ligand>
</feature>
<feature type="binding site" evidence="1">
    <location>
        <position position="165"/>
    </location>
    <ligand>
        <name>NAD(+)</name>
        <dbReference type="ChEBI" id="CHEBI:57540"/>
    </ligand>
</feature>
<feature type="binding site" evidence="1">
    <location>
        <position position="194"/>
    </location>
    <ligand>
        <name>NAD(+)</name>
        <dbReference type="ChEBI" id="CHEBI:57540"/>
    </ligand>
</feature>
<feature type="site" description="May act as an intermediate that passes the hydride ion from NADH to the substrate" evidence="1">
    <location>
        <position position="149"/>
    </location>
</feature>
<feature type="site" description="Transition state stabilizer" evidence="1">
    <location>
        <position position="158"/>
    </location>
</feature>
<feature type="modified residue" description="Phosphothreonine" evidence="1">
    <location>
        <position position="266"/>
    </location>
</feature>
<organism>
    <name type="scientific">Mycobacterium tuberculosis (strain CDC 1551 / Oshkosh)</name>
    <dbReference type="NCBI Taxonomy" id="83331"/>
    <lineage>
        <taxon>Bacteria</taxon>
        <taxon>Bacillati</taxon>
        <taxon>Actinomycetota</taxon>
        <taxon>Actinomycetes</taxon>
        <taxon>Mycobacteriales</taxon>
        <taxon>Mycobacteriaceae</taxon>
        <taxon>Mycobacterium</taxon>
        <taxon>Mycobacterium tuberculosis complex</taxon>
    </lineage>
</organism>
<protein>
    <recommendedName>
        <fullName evidence="1">Enoyl-[acyl-carrier-protein] reductase [NADH]</fullName>
        <shortName evidence="1">ENR</shortName>
        <shortName evidence="1">Enoyl-ACP reductase</shortName>
        <ecNumber evidence="1">1.3.1.9</ecNumber>
    </recommendedName>
    <alternativeName>
        <fullName evidence="1">FAS-II enoyl-ACP reductase</fullName>
    </alternativeName>
    <alternativeName>
        <fullName evidence="1">NADH-dependent 2-trans-enoyl-ACP reductase</fullName>
    </alternativeName>
</protein>
<comment type="function">
    <text evidence="1">Enoyl-ACP reductase of the type II fatty acid syntase (FAS-II) system, which is involved in the biosynthesis of mycolic acids, a major component of mycobacterial cell walls. Catalyzes the NADH-dependent reduction of the double bond of 2-trans-enoyl-[acyl-carrier protein], an essential step in the fatty acid elongation cycle of the FAS-II pathway. Shows preference for long-chain fatty acyl thioester substrates (&gt;C16), and can also use 2-trans-enoyl-CoAs as alternative substrates. The mycobacterial FAS-II system utilizes the products of the FAS-I system as primers to extend fatty acyl chain lengths up to C56, forming the meromycolate chain that serves as the precursor for final mycolic acids.</text>
</comment>
<comment type="function">
    <text evidence="1 2">Is the primary target of the first-line antitubercular drug isoniazid (INH) and of the second-line drug ethionamide (ETH). Overexpressed inhA confers INH and ETH resistance to M.tuberculosis (PubMed:12406221). The mechanism of isoniazid action against InhA is covalent attachment of the activated form of the drug to the nicotinamide ring of NAD and binding of the INH-NAD adduct to the active site of InhA. Similarly, the ETH-NAD adduct binds InhA (By similarity).</text>
</comment>
<comment type="catalytic activity">
    <reaction evidence="1">
        <text>a 2,3-saturated acyl-[ACP] + NAD(+) = a (2E)-enoyl-[ACP] + NADH + H(+)</text>
        <dbReference type="Rhea" id="RHEA:10240"/>
        <dbReference type="Rhea" id="RHEA-COMP:9925"/>
        <dbReference type="Rhea" id="RHEA-COMP:9926"/>
        <dbReference type="ChEBI" id="CHEBI:15378"/>
        <dbReference type="ChEBI" id="CHEBI:57540"/>
        <dbReference type="ChEBI" id="CHEBI:57945"/>
        <dbReference type="ChEBI" id="CHEBI:78784"/>
        <dbReference type="ChEBI" id="CHEBI:78785"/>
        <dbReference type="EC" id="1.3.1.9"/>
    </reaction>
    <physiologicalReaction direction="right-to-left" evidence="1">
        <dbReference type="Rhea" id="RHEA:10242"/>
    </physiologicalReaction>
</comment>
<comment type="catalytic activity">
    <reaction evidence="1">
        <text>a 2,3-saturated acyl-CoA + NAD(+) = a (2E)-enoyl-CoA + NADH + H(+)</text>
        <dbReference type="Rhea" id="RHEA:18177"/>
        <dbReference type="ChEBI" id="CHEBI:15378"/>
        <dbReference type="ChEBI" id="CHEBI:57540"/>
        <dbReference type="ChEBI" id="CHEBI:57945"/>
        <dbReference type="ChEBI" id="CHEBI:58856"/>
        <dbReference type="ChEBI" id="CHEBI:65111"/>
    </reaction>
    <physiologicalReaction direction="right-to-left" evidence="1">
        <dbReference type="Rhea" id="RHEA:18179"/>
    </physiologicalReaction>
</comment>
<comment type="activity regulation">
    <text evidence="1">InhA activity is controlled via phosphorylation: phosphorylation on Thr-266 decreases InhA activity (5-fold reduction) and likely negatively regulates biosynthesis of mycolic acids and growth of the bacterium. The antitubercular pro-drug isoniazid (INH) is oxidatively activated by the catalase-peroxidase KatG and then covalently binds NAD to form an adduct that inhibits the activity of InhA. The inhibitory adduct is the isonicotinic-acyl-NADH where the isonicotinic-acyl group replaces the 4S (and not the 4R) hydrogen of NADH. Similarly, the antitubercular pro-drugs ethionamide (ETH) and prothionamide (PTH) are activated by the flavoprotein monooxygenase EthA, and forms an adduct with NAD (ETH-NAD and PTH-NAD, respectively) that is a tight-binding inhibitor of InhA. Is inhibited by triclosan and derivatives, pyrazole derivative Genz-8575, indole-5-amide Genz-10850, alkyl diphenyl/diaryl ethers, pyrrolidine carboxamides, arylamides, pyridomycin, methyl-thiazoles, 4-hydroxy-2-pyridones, and N-benzyl-4-((heteroaryl)methyl)benzamides. Pyridomycin shows a unique mode of InhA inhibition by simultaneously blocking parts of the NADH and the lipid substrate-binding pocket of InhA. Is also inhibited by thiadiazole compounds, that have very attractive antitubercular properties.</text>
</comment>
<comment type="pathway">
    <text evidence="1">Lipid metabolism; mycolic acid biosynthesis.</text>
</comment>
<comment type="subunit">
    <text evidence="1">Homodimer. Homotetramer.</text>
</comment>
<comment type="PTM">
    <text evidence="1">Is phosphorylated on Thr-266 in vivo. In vitro, can be phosphorylated by multiple Ser/Thr protein kinases (STPK) such as PknA, PknB, PknE, PknH and PknL. Phosphorylation decreases enzymatic activity.</text>
</comment>
<comment type="miscellaneous">
    <text evidence="1">Many isoniazid- and ethionamide-resistant clinical isolates contain mutations within the inhA locus. Resistance to isoniazid and ethionamide can be conferred by the single substitution of alanine for serine 94; this drug resistance seems to be directly related to a perturbation in the hydrogen-bonding network that decreases the binding of NADH and the INH-NAD adduct.</text>
</comment>
<comment type="similarity">
    <text evidence="3">Belongs to the short-chain dehydrogenases/reductases (SDR) family. FabI subfamily.</text>
</comment>
<accession>P9WGR0</accession>
<accession>F2GEM2</accession>
<accession>P0A5Y6</accession>
<accession>P46533</accession>
<accession>Q540M9</accession>
<sequence>MTGLLDGKRILVSGIITDSSIAFHIARVAQEQGAQLVLTGFDRLRLIQRITDRLPAKAPLLELDVQNEEHLASLAGRVTEAIGAGNKLDGVVHSIGFMPQTGMGINPFFDAPYADVSKGIHISAYSYASMAKALLPIMNPGGSIVGMDFDPSRAMPAYNWMTVAKSALESVNRFVAREAGKYGVRSNLVAAGPIRTLAMSAIVGGALGEEAGAQIQLLEEGWDQRAPIGWNMKDATPVAKTVCALLSDWLPATTGDIIYADGGAHTQLL</sequence>
<reference key="1">
    <citation type="journal article" date="2002" name="J. Bacteriol.">
        <title>Whole-genome comparison of Mycobacterium tuberculosis clinical and laboratory strains.</title>
        <authorList>
            <person name="Fleischmann R.D."/>
            <person name="Alland D."/>
            <person name="Eisen J.A."/>
            <person name="Carpenter L."/>
            <person name="White O."/>
            <person name="Peterson J.D."/>
            <person name="DeBoy R.T."/>
            <person name="Dodson R.J."/>
            <person name="Gwinn M.L."/>
            <person name="Haft D.H."/>
            <person name="Hickey E.K."/>
            <person name="Kolonay J.F."/>
            <person name="Nelson W.C."/>
            <person name="Umayam L.A."/>
            <person name="Ermolaeva M.D."/>
            <person name="Salzberg S.L."/>
            <person name="Delcher A."/>
            <person name="Utterback T.R."/>
            <person name="Weidman J.F."/>
            <person name="Khouri H.M."/>
            <person name="Gill J."/>
            <person name="Mikula A."/>
            <person name="Bishai W."/>
            <person name="Jacobs W.R. Jr."/>
            <person name="Venter J.C."/>
            <person name="Fraser C.M."/>
        </authorList>
    </citation>
    <scope>NUCLEOTIDE SEQUENCE [LARGE SCALE GENOMIC DNA]</scope>
    <source>
        <strain>CDC 1551 / Oshkosh</strain>
    </source>
</reference>
<reference key="2">
    <citation type="journal article" date="2002" name="Mol. Microbiol.">
        <title>Overexpression of inhA, but not kasA, confers resistance to isoniazid and ethionamide in Mycobacterium smegmatis, M. bovis BCG and M. tuberculosis.</title>
        <authorList>
            <person name="Larsen M.H."/>
            <person name="Vilcheze C."/>
            <person name="Kremer L."/>
            <person name="Besra G.S."/>
            <person name="Parsons L."/>
            <person name="Salfinger M."/>
            <person name="Heifets L."/>
            <person name="Hazbon M.H."/>
            <person name="Alland D."/>
            <person name="Sacchettini J.C."/>
            <person name="Jacobs W.R. Jr."/>
        </authorList>
    </citation>
    <scope>DRUG TARGET</scope>
    <scope>DRUG RESISTANCE</scope>
    <source>
        <strain>CDC 1551 / Oshkosh</strain>
    </source>
</reference>
<gene>
    <name evidence="4" type="primary">inhA</name>
    <name type="ordered locus">MT1531</name>
</gene>
<evidence type="ECO:0000250" key="1">
    <source>
        <dbReference type="UniProtKB" id="P9WGR1"/>
    </source>
</evidence>
<evidence type="ECO:0000269" key="2">
    <source>
    </source>
</evidence>
<evidence type="ECO:0000305" key="3"/>
<evidence type="ECO:0000312" key="4">
    <source>
        <dbReference type="EMBL" id="AAK45796.1"/>
    </source>
</evidence>
<keyword id="KW-0046">Antibiotic resistance</keyword>
<keyword id="KW-0275">Fatty acid biosynthesis</keyword>
<keyword id="KW-0276">Fatty acid metabolism</keyword>
<keyword id="KW-0444">Lipid biosynthesis</keyword>
<keyword id="KW-0443">Lipid metabolism</keyword>
<keyword id="KW-0520">NAD</keyword>
<keyword id="KW-0560">Oxidoreductase</keyword>
<keyword id="KW-0597">Phosphoprotein</keyword>
<keyword id="KW-1185">Reference proteome</keyword>
<dbReference type="EC" id="1.3.1.9" evidence="1"/>
<dbReference type="EMBL" id="AE000516">
    <property type="protein sequence ID" value="AAK45796.1"/>
    <property type="molecule type" value="Genomic_DNA"/>
</dbReference>
<dbReference type="PIR" id="G70710">
    <property type="entry name" value="G70710"/>
</dbReference>
<dbReference type="RefSeq" id="WP_003407553.1">
    <property type="nucleotide sequence ID" value="NZ_KK341227.1"/>
</dbReference>
<dbReference type="SMR" id="P9WGR0"/>
<dbReference type="GeneID" id="45425463"/>
<dbReference type="KEGG" id="mtc:MT1531"/>
<dbReference type="PATRIC" id="fig|83331.31.peg.1646"/>
<dbReference type="HOGENOM" id="CLU_010194_10_1_11"/>
<dbReference type="UniPathway" id="UPA00915"/>
<dbReference type="EvolutionaryTrace" id="P9WGR0"/>
<dbReference type="Proteomes" id="UP000001020">
    <property type="component" value="Chromosome"/>
</dbReference>
<dbReference type="GO" id="GO:0004318">
    <property type="term" value="F:enoyl-[acyl-carrier-protein] reductase (NADH) activity"/>
    <property type="evidence" value="ECO:0007669"/>
    <property type="project" value="UniProtKB-EC"/>
</dbReference>
<dbReference type="GO" id="GO:0050343">
    <property type="term" value="F:trans-2-enoyl-CoA reductase (NADH) activity"/>
    <property type="evidence" value="ECO:0007669"/>
    <property type="project" value="RHEA"/>
</dbReference>
<dbReference type="GO" id="GO:0006633">
    <property type="term" value="P:fatty acid biosynthetic process"/>
    <property type="evidence" value="ECO:0007669"/>
    <property type="project" value="UniProtKB-KW"/>
</dbReference>
<dbReference type="GO" id="GO:0046677">
    <property type="term" value="P:response to antibiotic"/>
    <property type="evidence" value="ECO:0007669"/>
    <property type="project" value="UniProtKB-KW"/>
</dbReference>
<dbReference type="CDD" id="cd05372">
    <property type="entry name" value="ENR_SDR"/>
    <property type="match status" value="1"/>
</dbReference>
<dbReference type="FunFam" id="3.40.50.720:FF:000350">
    <property type="entry name" value="Enoyl-[acyl-carrier-protein] reductase [NADH]"/>
    <property type="match status" value="1"/>
</dbReference>
<dbReference type="Gene3D" id="3.40.50.720">
    <property type="entry name" value="NAD(P)-binding Rossmann-like Domain"/>
    <property type="match status" value="1"/>
</dbReference>
<dbReference type="InterPro" id="IPR014358">
    <property type="entry name" value="Enoyl-ACP_Rdtase_NADH"/>
</dbReference>
<dbReference type="InterPro" id="IPR053410">
    <property type="entry name" value="Mycobact_enoyl-ACP_red"/>
</dbReference>
<dbReference type="InterPro" id="IPR036291">
    <property type="entry name" value="NAD(P)-bd_dom_sf"/>
</dbReference>
<dbReference type="InterPro" id="IPR002347">
    <property type="entry name" value="SDR_fam"/>
</dbReference>
<dbReference type="NCBIfam" id="NF040631">
    <property type="entry name" value="InhA"/>
    <property type="match status" value="1"/>
</dbReference>
<dbReference type="NCBIfam" id="NF005908">
    <property type="entry name" value="PRK07889.1"/>
    <property type="match status" value="1"/>
</dbReference>
<dbReference type="PANTHER" id="PTHR43159">
    <property type="entry name" value="ENOYL-[ACYL-CARRIER-PROTEIN] REDUCTASE"/>
    <property type="match status" value="1"/>
</dbReference>
<dbReference type="PANTHER" id="PTHR43159:SF2">
    <property type="entry name" value="ENOYL-[ACYL-CARRIER-PROTEIN] REDUCTASE [NADH], CHLOROPLASTIC"/>
    <property type="match status" value="1"/>
</dbReference>
<dbReference type="Pfam" id="PF13561">
    <property type="entry name" value="adh_short_C2"/>
    <property type="match status" value="1"/>
</dbReference>
<dbReference type="PIRSF" id="PIRSF000094">
    <property type="entry name" value="Enoyl-ACP_rdct"/>
    <property type="match status" value="1"/>
</dbReference>
<dbReference type="SUPFAM" id="SSF51735">
    <property type="entry name" value="NAD(P)-binding Rossmann-fold domains"/>
    <property type="match status" value="1"/>
</dbReference>
<proteinExistence type="inferred from homology"/>